<gene>
    <name type="primary">PRM1</name>
</gene>
<sequence>MARYRRHSRSRSRSRYRRRRRRRSRHHNRRTYRRSRRHSRRRRGRRRGYSRRRYSRRGRRRY</sequence>
<accession>O18745</accession>
<reference key="1">
    <citation type="journal article" date="1997" name="Mol. Phylogenet. Evol.">
        <title>A multigene assessment of phylogenetic relationships within the dasyurid marsupial subfamily Sminthopsinae.</title>
        <authorList>
            <person name="Krajewski C."/>
            <person name="Blacket M."/>
            <person name="Buckley L."/>
            <person name="Westerman M."/>
        </authorList>
    </citation>
    <scope>NUCLEOTIDE SEQUENCE [GENOMIC DNA]</scope>
</reference>
<evidence type="ECO:0000256" key="1">
    <source>
        <dbReference type="SAM" id="MobiDB-lite"/>
    </source>
</evidence>
<evidence type="ECO:0000305" key="2"/>
<name>HSP1_ANTLA</name>
<comment type="function">
    <text>Protamines substitute for histones in the chromatin of sperm during the haploid phase of spermatogenesis. They compact sperm DNA into a highly condensed, stable and inactive complex.</text>
</comment>
<comment type="subcellular location">
    <subcellularLocation>
        <location>Nucleus</location>
    </subcellularLocation>
    <subcellularLocation>
        <location>Chromosome</location>
    </subcellularLocation>
</comment>
<comment type="tissue specificity">
    <text>Testis.</text>
</comment>
<comment type="similarity">
    <text evidence="2">Belongs to the protamine P1 family.</text>
</comment>
<dbReference type="EMBL" id="AF001587">
    <property type="protein sequence ID" value="AAB91377.1"/>
    <property type="molecule type" value="Genomic_DNA"/>
</dbReference>
<dbReference type="GO" id="GO:0000786">
    <property type="term" value="C:nucleosome"/>
    <property type="evidence" value="ECO:0007669"/>
    <property type="project" value="UniProtKB-KW"/>
</dbReference>
<dbReference type="GO" id="GO:0005634">
    <property type="term" value="C:nucleus"/>
    <property type="evidence" value="ECO:0007669"/>
    <property type="project" value="UniProtKB-SubCell"/>
</dbReference>
<dbReference type="GO" id="GO:0003677">
    <property type="term" value="F:DNA binding"/>
    <property type="evidence" value="ECO:0007669"/>
    <property type="project" value="UniProtKB-KW"/>
</dbReference>
<dbReference type="GO" id="GO:0030261">
    <property type="term" value="P:chromosome condensation"/>
    <property type="evidence" value="ECO:0007669"/>
    <property type="project" value="UniProtKB-KW"/>
</dbReference>
<dbReference type="GO" id="GO:0035092">
    <property type="term" value="P:sperm DNA condensation"/>
    <property type="evidence" value="ECO:0007669"/>
    <property type="project" value="InterPro"/>
</dbReference>
<dbReference type="InterPro" id="IPR000221">
    <property type="entry name" value="Protamine_P1"/>
</dbReference>
<dbReference type="PROSITE" id="PS00048">
    <property type="entry name" value="PROTAMINE_P1"/>
    <property type="match status" value="1"/>
</dbReference>
<proteinExistence type="evidence at transcript level"/>
<organism>
    <name type="scientific">Antechinomys laniger</name>
    <name type="common">Eastern jerboa marsupial</name>
    <dbReference type="NCBI Taxonomy" id="60701"/>
    <lineage>
        <taxon>Eukaryota</taxon>
        <taxon>Metazoa</taxon>
        <taxon>Chordata</taxon>
        <taxon>Craniata</taxon>
        <taxon>Vertebrata</taxon>
        <taxon>Euteleostomi</taxon>
        <taxon>Mammalia</taxon>
        <taxon>Metatheria</taxon>
        <taxon>Dasyuromorphia</taxon>
        <taxon>Dasyuridae</taxon>
        <taxon>Antechinomys</taxon>
    </lineage>
</organism>
<feature type="chain" id="PRO_0000191443" description="Sperm protamine P1">
    <location>
        <begin position="1"/>
        <end position="62"/>
    </location>
</feature>
<feature type="region of interest" description="Disordered" evidence="1">
    <location>
        <begin position="1"/>
        <end position="62"/>
    </location>
</feature>
<keyword id="KW-0158">Chromosome</keyword>
<keyword id="KW-0217">Developmental protein</keyword>
<keyword id="KW-0221">Differentiation</keyword>
<keyword id="KW-0226">DNA condensation</keyword>
<keyword id="KW-0238">DNA-binding</keyword>
<keyword id="KW-0544">Nucleosome core</keyword>
<keyword id="KW-0539">Nucleus</keyword>
<keyword id="KW-0744">Spermatogenesis</keyword>
<protein>
    <recommendedName>
        <fullName>Sperm protamine P1</fullName>
    </recommendedName>
</protein>